<keyword id="KW-0046">Antibiotic resistance</keyword>
<keyword id="KW-0997">Cell inner membrane</keyword>
<keyword id="KW-1003">Cell membrane</keyword>
<keyword id="KW-0133">Cell shape</keyword>
<keyword id="KW-0961">Cell wall biogenesis/degradation</keyword>
<keyword id="KW-0378">Hydrolase</keyword>
<keyword id="KW-0472">Membrane</keyword>
<keyword id="KW-0573">Peptidoglycan synthesis</keyword>
<keyword id="KW-1185">Reference proteome</keyword>
<keyword id="KW-0812">Transmembrane</keyword>
<keyword id="KW-1133">Transmembrane helix</keyword>
<dbReference type="EC" id="3.6.1.27" evidence="1"/>
<dbReference type="EMBL" id="AE010300">
    <property type="protein sequence ID" value="AAN49710.1"/>
    <property type="molecule type" value="Genomic_DNA"/>
</dbReference>
<dbReference type="RefSeq" id="NP_712692.1">
    <property type="nucleotide sequence ID" value="NC_004342.2"/>
</dbReference>
<dbReference type="RefSeq" id="WP_001070489.1">
    <property type="nucleotide sequence ID" value="NC_004342.2"/>
</dbReference>
<dbReference type="SMR" id="Q8F397"/>
<dbReference type="FunCoup" id="Q8F397">
    <property type="interactions" value="277"/>
</dbReference>
<dbReference type="STRING" id="189518.LA_2511"/>
<dbReference type="PaxDb" id="189518-LA_2511"/>
<dbReference type="EnsemblBacteria" id="AAN49710">
    <property type="protein sequence ID" value="AAN49710"/>
    <property type="gene ID" value="LA_2511"/>
</dbReference>
<dbReference type="KEGG" id="lil:LA_2511"/>
<dbReference type="PATRIC" id="fig|189518.3.peg.2493"/>
<dbReference type="HOGENOM" id="CLU_060296_2_0_12"/>
<dbReference type="InParanoid" id="Q8F397"/>
<dbReference type="OrthoDB" id="9808289at2"/>
<dbReference type="Proteomes" id="UP000001408">
    <property type="component" value="Chromosome I"/>
</dbReference>
<dbReference type="GO" id="GO:0005886">
    <property type="term" value="C:plasma membrane"/>
    <property type="evidence" value="ECO:0000318"/>
    <property type="project" value="GO_Central"/>
</dbReference>
<dbReference type="GO" id="GO:0050380">
    <property type="term" value="F:undecaprenyl-diphosphatase activity"/>
    <property type="evidence" value="ECO:0000318"/>
    <property type="project" value="GO_Central"/>
</dbReference>
<dbReference type="GO" id="GO:0071555">
    <property type="term" value="P:cell wall organization"/>
    <property type="evidence" value="ECO:0007669"/>
    <property type="project" value="UniProtKB-KW"/>
</dbReference>
<dbReference type="GO" id="GO:0009252">
    <property type="term" value="P:peptidoglycan biosynthetic process"/>
    <property type="evidence" value="ECO:0007669"/>
    <property type="project" value="UniProtKB-KW"/>
</dbReference>
<dbReference type="GO" id="GO:0000270">
    <property type="term" value="P:peptidoglycan metabolic process"/>
    <property type="evidence" value="ECO:0000318"/>
    <property type="project" value="GO_Central"/>
</dbReference>
<dbReference type="GO" id="GO:0008360">
    <property type="term" value="P:regulation of cell shape"/>
    <property type="evidence" value="ECO:0007669"/>
    <property type="project" value="UniProtKB-KW"/>
</dbReference>
<dbReference type="GO" id="GO:0046677">
    <property type="term" value="P:response to antibiotic"/>
    <property type="evidence" value="ECO:0007669"/>
    <property type="project" value="UniProtKB-UniRule"/>
</dbReference>
<dbReference type="HAMAP" id="MF_01006">
    <property type="entry name" value="Undec_diphosphatase"/>
    <property type="match status" value="1"/>
</dbReference>
<dbReference type="InterPro" id="IPR003824">
    <property type="entry name" value="UppP"/>
</dbReference>
<dbReference type="PANTHER" id="PTHR30622">
    <property type="entry name" value="UNDECAPRENYL-DIPHOSPHATASE"/>
    <property type="match status" value="1"/>
</dbReference>
<dbReference type="PANTHER" id="PTHR30622:SF3">
    <property type="entry name" value="UNDECAPRENYL-DIPHOSPHATASE"/>
    <property type="match status" value="1"/>
</dbReference>
<dbReference type="Pfam" id="PF02673">
    <property type="entry name" value="BacA"/>
    <property type="match status" value="1"/>
</dbReference>
<protein>
    <recommendedName>
        <fullName evidence="1">Undecaprenyl-diphosphatase</fullName>
        <ecNumber evidence="1">3.6.1.27</ecNumber>
    </recommendedName>
    <alternativeName>
        <fullName evidence="1">Bacitracin resistance protein</fullName>
    </alternativeName>
    <alternativeName>
        <fullName evidence="1">Undecaprenyl pyrophosphate phosphatase</fullName>
    </alternativeName>
</protein>
<sequence>MNPYLNAFLRSIIEAITEFLPVSSTGHLFLFSSFFPFYGENVEFDDLFDIFIQSGAILSVLFLYREKFKSQIVSSFRYILKQNSDSEGFHFLIQICIGAFPILIAGFIAKKFLDTIKARPDLLEILSGAWIFGGVLILVAEWYFHQRPEEKKSIGFKDSILIGIFQCMALIPGMSRSAATIITARFLGKDTKSSAEFSFFLAVPVLLAAGIYKLIKYRSILNGNTIPVLMFGFLVSFLLCTLVIRWFLRYIQKHSFSVFGVYRILLGVGVLVLTKLI</sequence>
<reference key="1">
    <citation type="journal article" date="2003" name="Nature">
        <title>Unique physiological and pathogenic features of Leptospira interrogans revealed by whole-genome sequencing.</title>
        <authorList>
            <person name="Ren S.-X."/>
            <person name="Fu G."/>
            <person name="Jiang X.-G."/>
            <person name="Zeng R."/>
            <person name="Miao Y.-G."/>
            <person name="Xu H."/>
            <person name="Zhang Y.-X."/>
            <person name="Xiong H."/>
            <person name="Lu G."/>
            <person name="Lu L.-F."/>
            <person name="Jiang H.-Q."/>
            <person name="Jia J."/>
            <person name="Tu Y.-F."/>
            <person name="Jiang J.-X."/>
            <person name="Gu W.-Y."/>
            <person name="Zhang Y.-Q."/>
            <person name="Cai Z."/>
            <person name="Sheng H.-H."/>
            <person name="Yin H.-F."/>
            <person name="Zhang Y."/>
            <person name="Zhu G.-F."/>
            <person name="Wan M."/>
            <person name="Huang H.-L."/>
            <person name="Qian Z."/>
            <person name="Wang S.-Y."/>
            <person name="Ma W."/>
            <person name="Yao Z.-J."/>
            <person name="Shen Y."/>
            <person name="Qiang B.-Q."/>
            <person name="Xia Q.-C."/>
            <person name="Guo X.-K."/>
            <person name="Danchin A."/>
            <person name="Saint Girons I."/>
            <person name="Somerville R.L."/>
            <person name="Wen Y.-M."/>
            <person name="Shi M.-H."/>
            <person name="Chen Z."/>
            <person name="Xu J.-G."/>
            <person name="Zhao G.-P."/>
        </authorList>
    </citation>
    <scope>NUCLEOTIDE SEQUENCE [LARGE SCALE GENOMIC DNA]</scope>
    <source>
        <strain>56601</strain>
    </source>
</reference>
<organism>
    <name type="scientific">Leptospira interrogans serogroup Icterohaemorrhagiae serovar Lai (strain 56601)</name>
    <dbReference type="NCBI Taxonomy" id="189518"/>
    <lineage>
        <taxon>Bacteria</taxon>
        <taxon>Pseudomonadati</taxon>
        <taxon>Spirochaetota</taxon>
        <taxon>Spirochaetia</taxon>
        <taxon>Leptospirales</taxon>
        <taxon>Leptospiraceae</taxon>
        <taxon>Leptospira</taxon>
    </lineage>
</organism>
<gene>
    <name evidence="1" type="primary">uppP</name>
    <name type="synonym">bacA</name>
    <name type="synonym">upk</name>
    <name type="ordered locus">LA_2511</name>
</gene>
<comment type="function">
    <text evidence="1">Catalyzes the dephosphorylation of undecaprenyl diphosphate (UPP). Confers resistance to bacitracin.</text>
</comment>
<comment type="catalytic activity">
    <reaction evidence="1">
        <text>di-trans,octa-cis-undecaprenyl diphosphate + H2O = di-trans,octa-cis-undecaprenyl phosphate + phosphate + H(+)</text>
        <dbReference type="Rhea" id="RHEA:28094"/>
        <dbReference type="ChEBI" id="CHEBI:15377"/>
        <dbReference type="ChEBI" id="CHEBI:15378"/>
        <dbReference type="ChEBI" id="CHEBI:43474"/>
        <dbReference type="ChEBI" id="CHEBI:58405"/>
        <dbReference type="ChEBI" id="CHEBI:60392"/>
        <dbReference type="EC" id="3.6.1.27"/>
    </reaction>
</comment>
<comment type="subcellular location">
    <subcellularLocation>
        <location evidence="1">Cell inner membrane</location>
        <topology evidence="1">Multi-pass membrane protein</topology>
    </subcellularLocation>
</comment>
<comment type="miscellaneous">
    <text>Bacitracin is thought to be involved in the inhibition of peptidoglycan synthesis by sequestering undecaprenyl diphosphate, thereby reducing the pool of lipid carrier available.</text>
</comment>
<comment type="similarity">
    <text evidence="1">Belongs to the UppP family.</text>
</comment>
<accession>Q8F397</accession>
<name>UPPP_LEPIN</name>
<proteinExistence type="inferred from homology"/>
<feature type="chain" id="PRO_0000151161" description="Undecaprenyl-diphosphatase">
    <location>
        <begin position="1"/>
        <end position="277"/>
    </location>
</feature>
<feature type="transmembrane region" description="Helical" evidence="1">
    <location>
        <begin position="19"/>
        <end position="39"/>
    </location>
</feature>
<feature type="transmembrane region" description="Helical" evidence="1">
    <location>
        <begin position="44"/>
        <end position="64"/>
    </location>
</feature>
<feature type="transmembrane region" description="Helical" evidence="1">
    <location>
        <begin position="89"/>
        <end position="109"/>
    </location>
</feature>
<feature type="transmembrane region" description="Helical" evidence="1">
    <location>
        <begin position="122"/>
        <end position="142"/>
    </location>
</feature>
<feature type="transmembrane region" description="Helical" evidence="1">
    <location>
        <begin position="154"/>
        <end position="174"/>
    </location>
</feature>
<feature type="transmembrane region" description="Helical" evidence="1">
    <location>
        <begin position="195"/>
        <end position="215"/>
    </location>
</feature>
<feature type="transmembrane region" description="Helical" evidence="1">
    <location>
        <begin position="224"/>
        <end position="244"/>
    </location>
</feature>
<feature type="transmembrane region" description="Helical" evidence="1">
    <location>
        <begin position="257"/>
        <end position="277"/>
    </location>
</feature>
<evidence type="ECO:0000255" key="1">
    <source>
        <dbReference type="HAMAP-Rule" id="MF_01006"/>
    </source>
</evidence>